<name>METK4_BRAJU</name>
<organism>
    <name type="scientific">Brassica juncea</name>
    <name type="common">Indian mustard</name>
    <name type="synonym">Sinapis juncea</name>
    <dbReference type="NCBI Taxonomy" id="3707"/>
    <lineage>
        <taxon>Eukaryota</taxon>
        <taxon>Viridiplantae</taxon>
        <taxon>Streptophyta</taxon>
        <taxon>Embryophyta</taxon>
        <taxon>Tracheophyta</taxon>
        <taxon>Spermatophyta</taxon>
        <taxon>Magnoliopsida</taxon>
        <taxon>eudicotyledons</taxon>
        <taxon>Gunneridae</taxon>
        <taxon>Pentapetalae</taxon>
        <taxon>rosids</taxon>
        <taxon>malvids</taxon>
        <taxon>Brassicales</taxon>
        <taxon>Brassicaceae</taxon>
        <taxon>Brassiceae</taxon>
        <taxon>Brassica</taxon>
    </lineage>
</organism>
<sequence length="390" mass="42600">METFLFTSESVNEGHPDKLCDQVSDAILDACLEQDPESKVACETCTKTNMVMVFGEITTSAKVDYEKIVRSTCREIGFISADVGLDADKCNVLVNIEQQSPDIAQGVHGHLTKKPEDIGAGDQGHMFGYATDETPELMPLTHVLATKLGAKLTEVRKNKTCPWLRPDGKTQVTVEYKNEGGAMIPIRVHTVLISTQHDETVTNDEIAVDLKEHVIKPVIPAKYLDENTIFHLNPSGRFVIGGPHGDAGLTGRKIIIDTYGGWGAHGGGAFSGKDPTKVDRSGAYIVRQAAKSVVATGLARRCIVQVSYAIGVPEPLSVFVDTYKTGTIPDKDILVLIKEAFDFRPGMMAINLDLKRGGNFRFQKTAAYGHFGRDDPDFTWEVIKPLKPKA</sequence>
<comment type="function">
    <text evidence="5">Catalyzes the formation of S-adenosylmethionine from methionine and ATP. The reaction comprises two steps that are both catalyzed by the same enzyme: formation of S-adenosylmethionine (AdoMet) and triphosphate, and subsequent hydrolysis of the triphosphate.</text>
</comment>
<comment type="catalytic activity">
    <reaction evidence="5">
        <text>L-methionine + ATP + H2O = S-adenosyl-L-methionine + phosphate + diphosphate</text>
        <dbReference type="Rhea" id="RHEA:21080"/>
        <dbReference type="ChEBI" id="CHEBI:15377"/>
        <dbReference type="ChEBI" id="CHEBI:30616"/>
        <dbReference type="ChEBI" id="CHEBI:33019"/>
        <dbReference type="ChEBI" id="CHEBI:43474"/>
        <dbReference type="ChEBI" id="CHEBI:57844"/>
        <dbReference type="ChEBI" id="CHEBI:59789"/>
        <dbReference type="EC" id="2.5.1.6"/>
    </reaction>
</comment>
<comment type="cofactor">
    <cofactor evidence="5">
        <name>Mn(2+)</name>
        <dbReference type="ChEBI" id="CHEBI:29035"/>
    </cofactor>
    <cofactor evidence="5">
        <name>Mg(2+)</name>
        <dbReference type="ChEBI" id="CHEBI:18420"/>
    </cofactor>
    <cofactor evidence="5">
        <name>Co(2+)</name>
        <dbReference type="ChEBI" id="CHEBI:48828"/>
    </cofactor>
    <text evidence="3 5">Binds 2 divalent ions per subunit. The metal ions interact primarily with the substrate (By similarity). Can utilize magnesium, manganese or cobalt (in vitro) (By similarity).</text>
</comment>
<comment type="cofactor">
    <cofactor evidence="5">
        <name>K(+)</name>
        <dbReference type="ChEBI" id="CHEBI:29103"/>
    </cofactor>
    <text evidence="3">Binds 1 potassium ion per subunit. The potassium ion interacts primarily with the substrate (By similarity).</text>
</comment>
<comment type="pathway">
    <text evidence="5">Amino-acid biosynthesis; S-adenosyl-L-methionine biosynthesis; S-adenosyl-L-methionine from L-methionine: step 1/1.</text>
</comment>
<comment type="subunit">
    <text evidence="1">Homotetramer.</text>
</comment>
<comment type="subcellular location">
    <subcellularLocation>
        <location evidence="1">Cytoplasm</location>
    </subcellularLocation>
</comment>
<comment type="tissue specificity">
    <text evidence="6">Mostly expressed in flowers, seedpods and roots, and, to a lower extent, in stems and leaves.</text>
</comment>
<comment type="induction">
    <text evidence="6">By polyamines (PAs: putrescine, spermidine and spermine), methylglyoxal (bis-guanyhydrazone) (MGBG), and salt.</text>
</comment>
<comment type="similarity">
    <text evidence="7">Belongs to the AdoMet synthase family.</text>
</comment>
<protein>
    <recommendedName>
        <fullName>S-adenosylmethionine synthase 4</fullName>
        <shortName>AdoMet synthase 4</shortName>
        <ecNumber evidence="5">2.5.1.6</ecNumber>
    </recommendedName>
    <alternativeName>
        <fullName>Methionine adenosyltransferase 4</fullName>
        <shortName>MAT 4</shortName>
    </alternativeName>
</protein>
<feature type="chain" id="PRO_0000363013" description="S-adenosylmethionine synthase 4">
    <location>
        <begin position="1"/>
        <end position="390"/>
    </location>
</feature>
<feature type="binding site" evidence="3">
    <location>
        <position position="9"/>
    </location>
    <ligand>
        <name>Mg(2+)</name>
        <dbReference type="ChEBI" id="CHEBI:18420"/>
    </ligand>
</feature>
<feature type="binding site" description="in other chain" evidence="4">
    <location>
        <position position="15"/>
    </location>
    <ligand>
        <name>ATP</name>
        <dbReference type="ChEBI" id="CHEBI:30616"/>
        <note>ligand shared between two neighboring subunits</note>
    </ligand>
</feature>
<feature type="binding site" evidence="2">
    <location>
        <position position="43"/>
    </location>
    <ligand>
        <name>K(+)</name>
        <dbReference type="ChEBI" id="CHEBI:29103"/>
    </ligand>
</feature>
<feature type="binding site" description="in other chain" evidence="2">
    <location>
        <position position="56"/>
    </location>
    <ligand>
        <name>L-methionine</name>
        <dbReference type="ChEBI" id="CHEBI:57844"/>
        <note>ligand shared between two neighboring subunits</note>
    </ligand>
</feature>
<feature type="binding site" description="in other chain" evidence="2">
    <location>
        <position position="99"/>
    </location>
    <ligand>
        <name>L-methionine</name>
        <dbReference type="ChEBI" id="CHEBI:57844"/>
        <note>ligand shared between two neighboring subunits</note>
    </ligand>
</feature>
<feature type="binding site" description="in other chain" evidence="4">
    <location>
        <begin position="167"/>
        <end position="169"/>
    </location>
    <ligand>
        <name>ATP</name>
        <dbReference type="ChEBI" id="CHEBI:30616"/>
        <note>ligand shared between two neighboring subunits</note>
    </ligand>
</feature>
<feature type="binding site" description="in other chain" evidence="4">
    <location>
        <begin position="235"/>
        <end position="238"/>
    </location>
    <ligand>
        <name>ATP</name>
        <dbReference type="ChEBI" id="CHEBI:30616"/>
        <note>ligand shared between two neighboring subunits</note>
    </ligand>
</feature>
<feature type="binding site" description="in other chain" evidence="4">
    <location>
        <position position="246"/>
    </location>
    <ligand>
        <name>ATP</name>
        <dbReference type="ChEBI" id="CHEBI:30616"/>
        <note>ligand shared between two neighboring subunits</note>
    </ligand>
</feature>
<feature type="binding site" evidence="2">
    <location>
        <position position="246"/>
    </location>
    <ligand>
        <name>L-methionine</name>
        <dbReference type="ChEBI" id="CHEBI:57844"/>
        <note>ligand shared between two neighboring subunits</note>
    </ligand>
</feature>
<feature type="binding site" description="in other chain" evidence="2">
    <location>
        <begin position="252"/>
        <end position="253"/>
    </location>
    <ligand>
        <name>ATP</name>
        <dbReference type="ChEBI" id="CHEBI:30616"/>
        <note>ligand shared between two neighboring subunits</note>
    </ligand>
</feature>
<feature type="binding site" evidence="2">
    <location>
        <position position="269"/>
    </location>
    <ligand>
        <name>ATP</name>
        <dbReference type="ChEBI" id="CHEBI:30616"/>
        <note>ligand shared between two neighboring subunits</note>
    </ligand>
</feature>
<feature type="binding site" evidence="2">
    <location>
        <position position="273"/>
    </location>
    <ligand>
        <name>ATP</name>
        <dbReference type="ChEBI" id="CHEBI:30616"/>
        <note>ligand shared between two neighboring subunits</note>
    </ligand>
</feature>
<feature type="binding site" evidence="3">
    <location>
        <position position="277"/>
    </location>
    <ligand>
        <name>ATP</name>
        <dbReference type="ChEBI" id="CHEBI:30616"/>
        <note>ligand shared between two neighboring subunits</note>
    </ligand>
</feature>
<feature type="binding site" description="in other chain" evidence="2">
    <location>
        <position position="277"/>
    </location>
    <ligand>
        <name>L-methionine</name>
        <dbReference type="ChEBI" id="CHEBI:57844"/>
        <note>ligand shared between two neighboring subunits</note>
    </ligand>
</feature>
<accession>Q94FA5</accession>
<keyword id="KW-0067">ATP-binding</keyword>
<keyword id="KW-0170">Cobalt</keyword>
<keyword id="KW-0963">Cytoplasm</keyword>
<keyword id="KW-0460">Magnesium</keyword>
<keyword id="KW-0479">Metal-binding</keyword>
<keyword id="KW-0547">Nucleotide-binding</keyword>
<keyword id="KW-0554">One-carbon metabolism</keyword>
<keyword id="KW-0630">Potassium</keyword>
<keyword id="KW-0808">Transferase</keyword>
<reference key="1">
    <citation type="journal article" date="2002" name="Physiol. Plantarum">
        <title>Characterization of S-adenosylmethionine synthetase genes and its expression is associated with ethylene synthesis in mustard (Brassica juncea).</title>
        <authorList>
            <person name="Lim C.-C."/>
            <person name="Liu J.-Z."/>
            <person name="Pua E.-C."/>
        </authorList>
    </citation>
    <scope>NUCLEOTIDE SEQUENCE [MRNA]</scope>
    <scope>INDUCTION</scope>
    <scope>TISSUE SPECIFICITY</scope>
</reference>
<evidence type="ECO:0000250" key="1"/>
<evidence type="ECO:0000250" key="2">
    <source>
        <dbReference type="UniProtKB" id="P0A817"/>
    </source>
</evidence>
<evidence type="ECO:0000250" key="3">
    <source>
        <dbReference type="UniProtKB" id="P13444"/>
    </source>
</evidence>
<evidence type="ECO:0000250" key="4">
    <source>
        <dbReference type="UniProtKB" id="Q00266"/>
    </source>
</evidence>
<evidence type="ECO:0000250" key="5">
    <source>
        <dbReference type="UniProtKB" id="Q96551"/>
    </source>
</evidence>
<evidence type="ECO:0000269" key="6">
    <source ref="1"/>
</evidence>
<evidence type="ECO:0000305" key="7"/>
<gene>
    <name type="primary">MSAMS4</name>
</gene>
<dbReference type="EC" id="2.5.1.6" evidence="5"/>
<dbReference type="EMBL" id="AF379014">
    <property type="protein sequence ID" value="AAK71234.1"/>
    <property type="molecule type" value="mRNA"/>
</dbReference>
<dbReference type="SMR" id="Q94FA5"/>
<dbReference type="UniPathway" id="UPA00315">
    <property type="reaction ID" value="UER00080"/>
</dbReference>
<dbReference type="GO" id="GO:0005737">
    <property type="term" value="C:cytoplasm"/>
    <property type="evidence" value="ECO:0007669"/>
    <property type="project" value="UniProtKB-SubCell"/>
</dbReference>
<dbReference type="GO" id="GO:0005524">
    <property type="term" value="F:ATP binding"/>
    <property type="evidence" value="ECO:0007669"/>
    <property type="project" value="UniProtKB-KW"/>
</dbReference>
<dbReference type="GO" id="GO:0046872">
    <property type="term" value="F:metal ion binding"/>
    <property type="evidence" value="ECO:0007669"/>
    <property type="project" value="UniProtKB-KW"/>
</dbReference>
<dbReference type="GO" id="GO:0004478">
    <property type="term" value="F:methionine adenosyltransferase activity"/>
    <property type="evidence" value="ECO:0007669"/>
    <property type="project" value="UniProtKB-EC"/>
</dbReference>
<dbReference type="GO" id="GO:0006730">
    <property type="term" value="P:one-carbon metabolic process"/>
    <property type="evidence" value="ECO:0007669"/>
    <property type="project" value="UniProtKB-KW"/>
</dbReference>
<dbReference type="GO" id="GO:0006556">
    <property type="term" value="P:S-adenosylmethionine biosynthetic process"/>
    <property type="evidence" value="ECO:0007669"/>
    <property type="project" value="UniProtKB-UniPathway"/>
</dbReference>
<dbReference type="CDD" id="cd18079">
    <property type="entry name" value="S-AdoMet_synt"/>
    <property type="match status" value="1"/>
</dbReference>
<dbReference type="FunFam" id="3.30.300.10:FF:000001">
    <property type="entry name" value="S-adenosylmethionine synthase"/>
    <property type="match status" value="1"/>
</dbReference>
<dbReference type="FunFam" id="3.30.300.10:FF:000003">
    <property type="entry name" value="S-adenosylmethionine synthase"/>
    <property type="match status" value="1"/>
</dbReference>
<dbReference type="FunFam" id="3.30.300.10:FF:000004">
    <property type="entry name" value="S-adenosylmethionine synthase"/>
    <property type="match status" value="1"/>
</dbReference>
<dbReference type="Gene3D" id="3.30.300.10">
    <property type="match status" value="3"/>
</dbReference>
<dbReference type="HAMAP" id="MF_00086">
    <property type="entry name" value="S_AdoMet_synth1"/>
    <property type="match status" value="1"/>
</dbReference>
<dbReference type="InterPro" id="IPR022631">
    <property type="entry name" value="ADOMET_SYNTHASE_CS"/>
</dbReference>
<dbReference type="InterPro" id="IPR022630">
    <property type="entry name" value="S-AdoMet_synt_C"/>
</dbReference>
<dbReference type="InterPro" id="IPR022629">
    <property type="entry name" value="S-AdoMet_synt_central"/>
</dbReference>
<dbReference type="InterPro" id="IPR022628">
    <property type="entry name" value="S-AdoMet_synt_N"/>
</dbReference>
<dbReference type="InterPro" id="IPR002133">
    <property type="entry name" value="S-AdoMet_synthetase"/>
</dbReference>
<dbReference type="InterPro" id="IPR022636">
    <property type="entry name" value="S-AdoMet_synthetase_sfam"/>
</dbReference>
<dbReference type="NCBIfam" id="TIGR01034">
    <property type="entry name" value="metK"/>
    <property type="match status" value="1"/>
</dbReference>
<dbReference type="PANTHER" id="PTHR11964">
    <property type="entry name" value="S-ADENOSYLMETHIONINE SYNTHETASE"/>
    <property type="match status" value="1"/>
</dbReference>
<dbReference type="Pfam" id="PF02773">
    <property type="entry name" value="S-AdoMet_synt_C"/>
    <property type="match status" value="1"/>
</dbReference>
<dbReference type="Pfam" id="PF02772">
    <property type="entry name" value="S-AdoMet_synt_M"/>
    <property type="match status" value="1"/>
</dbReference>
<dbReference type="Pfam" id="PF00438">
    <property type="entry name" value="S-AdoMet_synt_N"/>
    <property type="match status" value="1"/>
</dbReference>
<dbReference type="PIRSF" id="PIRSF000497">
    <property type="entry name" value="MAT"/>
    <property type="match status" value="1"/>
</dbReference>
<dbReference type="SUPFAM" id="SSF55973">
    <property type="entry name" value="S-adenosylmethionine synthetase"/>
    <property type="match status" value="3"/>
</dbReference>
<dbReference type="PROSITE" id="PS00376">
    <property type="entry name" value="ADOMET_SYNTHASE_1"/>
    <property type="match status" value="1"/>
</dbReference>
<dbReference type="PROSITE" id="PS00377">
    <property type="entry name" value="ADOMET_SYNTHASE_2"/>
    <property type="match status" value="1"/>
</dbReference>
<proteinExistence type="evidence at transcript level"/>